<feature type="signal peptide" evidence="4">
    <location>
        <begin position="1"/>
        <end position="30"/>
    </location>
</feature>
<feature type="chain" id="PRO_0000434580" description="Netrin receptor UNC5D">
    <location>
        <begin position="31"/>
        <end position="956"/>
    </location>
</feature>
<feature type="topological domain" description="Extracellular" evidence="9">
    <location>
        <begin position="31"/>
        <end position="382"/>
    </location>
</feature>
<feature type="transmembrane region" description="Helical" evidence="4">
    <location>
        <begin position="383"/>
        <end position="403"/>
    </location>
</feature>
<feature type="topological domain" description="Cytoplasmic" evidence="9">
    <location>
        <begin position="404"/>
        <end position="956"/>
    </location>
</feature>
<feature type="domain" description="Ig-like" evidence="5">
    <location>
        <begin position="52"/>
        <end position="149"/>
    </location>
</feature>
<feature type="domain" description="Ig-like C2-type" evidence="5">
    <location>
        <begin position="164"/>
        <end position="242"/>
    </location>
</feature>
<feature type="domain" description="TSP type-1 1" evidence="6">
    <location>
        <begin position="250"/>
        <end position="304"/>
    </location>
</feature>
<feature type="domain" description="TSP type-1 2" evidence="6">
    <location>
        <begin position="306"/>
        <end position="358"/>
    </location>
</feature>
<feature type="domain" description="ZU5" evidence="7">
    <location>
        <begin position="545"/>
        <end position="685"/>
    </location>
</feature>
<feature type="domain" description="Death" evidence="9">
    <location>
        <begin position="862"/>
        <end position="939"/>
    </location>
</feature>
<feature type="region of interest" description="Important for interaction with FLRT2" evidence="8">
    <location>
        <begin position="89"/>
        <end position="91"/>
    </location>
</feature>
<feature type="site" description="Cleavage; by caspase-3" evidence="9">
    <location>
        <begin position="419"/>
        <end position="420"/>
    </location>
</feature>
<feature type="glycosylation site" description="N-linked (GlcNAc...) asparagine" evidence="4">
    <location>
        <position position="115"/>
    </location>
</feature>
<feature type="glycosylation site" description="N-linked (GlcNAc...) asparagine" evidence="4">
    <location>
        <position position="226"/>
    </location>
</feature>
<feature type="disulfide bond" evidence="12">
    <location>
        <begin position="73"/>
        <end position="134"/>
    </location>
</feature>
<feature type="disulfide bond" evidence="12">
    <location>
        <begin position="85"/>
        <end position="132"/>
    </location>
</feature>
<feature type="disulfide bond" evidence="2 5">
    <location>
        <begin position="178"/>
        <end position="229"/>
    </location>
</feature>
<feature type="disulfide bond" evidence="6">
    <location>
        <begin position="262"/>
        <end position="299"/>
    </location>
</feature>
<feature type="disulfide bond" evidence="6">
    <location>
        <begin position="266"/>
        <end position="303"/>
    </location>
</feature>
<feature type="disulfide bond" evidence="6">
    <location>
        <begin position="277"/>
        <end position="289"/>
    </location>
</feature>
<feature type="disulfide bond" evidence="2">
    <location>
        <begin position="318"/>
        <end position="352"/>
    </location>
</feature>
<feature type="disulfide bond" evidence="2">
    <location>
        <begin position="322"/>
        <end position="357"/>
    </location>
</feature>
<feature type="disulfide bond" evidence="2">
    <location>
        <begin position="330"/>
        <end position="342"/>
    </location>
</feature>
<feature type="mutagenesis site" description="Abolishes interaction with FLRT2; when associated with T-91." evidence="8">
    <original>W</original>
    <variation>N</variation>
    <location>
        <position position="89"/>
    </location>
</feature>
<feature type="mutagenesis site" description="Abolishes interaction with FLRT2; when associated with N-89." evidence="8">
    <original>H</original>
    <variation>T</variation>
    <location>
        <position position="91"/>
    </location>
</feature>
<feature type="strand" evidence="13">
    <location>
        <begin position="53"/>
        <end position="56"/>
    </location>
</feature>
<feature type="strand" evidence="13">
    <location>
        <begin position="61"/>
        <end position="66"/>
    </location>
</feature>
<feature type="strand" evidence="13">
    <location>
        <begin position="69"/>
        <end position="77"/>
    </location>
</feature>
<feature type="strand" evidence="13">
    <location>
        <begin position="79"/>
        <end position="85"/>
    </location>
</feature>
<feature type="helix" evidence="13">
    <location>
        <begin position="92"/>
        <end position="94"/>
    </location>
</feature>
<feature type="strand" evidence="13">
    <location>
        <begin position="95"/>
        <end position="101"/>
    </location>
</feature>
<feature type="strand" evidence="13">
    <location>
        <begin position="103"/>
        <end position="106"/>
    </location>
</feature>
<feature type="strand" evidence="13">
    <location>
        <begin position="108"/>
        <end position="116"/>
    </location>
</feature>
<feature type="helix" evidence="13">
    <location>
        <begin position="118"/>
        <end position="123"/>
    </location>
</feature>
<feature type="strand" evidence="13">
    <location>
        <begin position="131"/>
        <end position="137"/>
    </location>
</feature>
<feature type="strand" evidence="13">
    <location>
        <begin position="139"/>
        <end position="152"/>
    </location>
</feature>
<feature type="strand" evidence="14">
    <location>
        <begin position="174"/>
        <end position="177"/>
    </location>
</feature>
<feature type="strand" evidence="14">
    <location>
        <begin position="183"/>
        <end position="185"/>
    </location>
</feature>
<feature type="strand" evidence="14">
    <location>
        <begin position="188"/>
        <end position="197"/>
    </location>
</feature>
<feature type="turn" evidence="14">
    <location>
        <begin position="200"/>
        <end position="202"/>
    </location>
</feature>
<feature type="strand" evidence="14">
    <location>
        <begin position="206"/>
        <end position="208"/>
    </location>
</feature>
<feature type="strand" evidence="14">
    <location>
        <begin position="212"/>
        <end position="222"/>
    </location>
</feature>
<feature type="strand" evidence="14">
    <location>
        <begin position="225"/>
        <end position="232"/>
    </location>
</feature>
<feature type="strand" evidence="14">
    <location>
        <begin position="237"/>
        <end position="239"/>
    </location>
</feature>
<feature type="strand" evidence="14">
    <location>
        <begin position="243"/>
        <end position="247"/>
    </location>
</feature>
<feature type="strand" evidence="14">
    <location>
        <begin position="263"/>
        <end position="274"/>
    </location>
</feature>
<feature type="strand" evidence="14">
    <location>
        <begin position="283"/>
        <end position="285"/>
    </location>
</feature>
<feature type="strand" evidence="14">
    <location>
        <begin position="293"/>
        <end position="301"/>
    </location>
</feature>
<accession>F1LW30</accession>
<protein>
    <recommendedName>
        <fullName>Netrin receptor UNC5D</fullName>
    </recommendedName>
    <alternativeName>
        <fullName>Protein unc-5 homolog D</fullName>
    </alternativeName>
</protein>
<proteinExistence type="evidence at protein level"/>
<evidence type="ECO:0000250" key="1">
    <source>
        <dbReference type="UniProtKB" id="Q6UXZ4"/>
    </source>
</evidence>
<evidence type="ECO:0000250" key="2">
    <source>
        <dbReference type="UniProtKB" id="Q6ZN44"/>
    </source>
</evidence>
<evidence type="ECO:0000250" key="3">
    <source>
        <dbReference type="UniProtKB" id="Q8K1S2"/>
    </source>
</evidence>
<evidence type="ECO:0000255" key="4"/>
<evidence type="ECO:0000255" key="5">
    <source>
        <dbReference type="PROSITE-ProRule" id="PRU00114"/>
    </source>
</evidence>
<evidence type="ECO:0000255" key="6">
    <source>
        <dbReference type="PROSITE-ProRule" id="PRU00210"/>
    </source>
</evidence>
<evidence type="ECO:0000255" key="7">
    <source>
        <dbReference type="PROSITE-ProRule" id="PRU00485"/>
    </source>
</evidence>
<evidence type="ECO:0000269" key="8">
    <source>
    </source>
</evidence>
<evidence type="ECO:0000305" key="9"/>
<evidence type="ECO:0000312" key="10">
    <source>
        <dbReference type="Proteomes" id="UP000002494"/>
    </source>
</evidence>
<evidence type="ECO:0000312" key="11">
    <source>
        <dbReference type="RGD" id="1309245"/>
    </source>
</evidence>
<evidence type="ECO:0007744" key="12">
    <source>
        <dbReference type="PDB" id="4V2B"/>
    </source>
</evidence>
<evidence type="ECO:0007829" key="13">
    <source>
        <dbReference type="PDB" id="4V2B"/>
    </source>
</evidence>
<evidence type="ECO:0007829" key="14">
    <source>
        <dbReference type="PDB" id="5FTT"/>
    </source>
</evidence>
<name>UNC5D_RAT</name>
<reference key="1">
    <citation type="journal article" date="2004" name="Nature">
        <title>Genome sequence of the Brown Norway rat yields insights into mammalian evolution.</title>
        <authorList>
            <person name="Gibbs R.A."/>
            <person name="Weinstock G.M."/>
            <person name="Metzker M.L."/>
            <person name="Muzny D.M."/>
            <person name="Sodergren E.J."/>
            <person name="Scherer S."/>
            <person name="Scott G."/>
            <person name="Steffen D."/>
            <person name="Worley K.C."/>
            <person name="Burch P.E."/>
            <person name="Okwuonu G."/>
            <person name="Hines S."/>
            <person name="Lewis L."/>
            <person name="Deramo C."/>
            <person name="Delgado O."/>
            <person name="Dugan-Rocha S."/>
            <person name="Miner G."/>
            <person name="Morgan M."/>
            <person name="Hawes A."/>
            <person name="Gill R."/>
            <person name="Holt R.A."/>
            <person name="Adams M.D."/>
            <person name="Amanatides P.G."/>
            <person name="Baden-Tillson H."/>
            <person name="Barnstead M."/>
            <person name="Chin S."/>
            <person name="Evans C.A."/>
            <person name="Ferriera S."/>
            <person name="Fosler C."/>
            <person name="Glodek A."/>
            <person name="Gu Z."/>
            <person name="Jennings D."/>
            <person name="Kraft C.L."/>
            <person name="Nguyen T."/>
            <person name="Pfannkoch C.M."/>
            <person name="Sitter C."/>
            <person name="Sutton G.G."/>
            <person name="Venter J.C."/>
            <person name="Woodage T."/>
            <person name="Smith D."/>
            <person name="Lee H.-M."/>
            <person name="Gustafson E."/>
            <person name="Cahill P."/>
            <person name="Kana A."/>
            <person name="Doucette-Stamm L."/>
            <person name="Weinstock K."/>
            <person name="Fechtel K."/>
            <person name="Weiss R.B."/>
            <person name="Dunn D.M."/>
            <person name="Green E.D."/>
            <person name="Blakesley R.W."/>
            <person name="Bouffard G.G."/>
            <person name="De Jong P.J."/>
            <person name="Osoegawa K."/>
            <person name="Zhu B."/>
            <person name="Marra M."/>
            <person name="Schein J."/>
            <person name="Bosdet I."/>
            <person name="Fjell C."/>
            <person name="Jones S."/>
            <person name="Krzywinski M."/>
            <person name="Mathewson C."/>
            <person name="Siddiqui A."/>
            <person name="Wye N."/>
            <person name="McPherson J."/>
            <person name="Zhao S."/>
            <person name="Fraser C.M."/>
            <person name="Shetty J."/>
            <person name="Shatsman S."/>
            <person name="Geer K."/>
            <person name="Chen Y."/>
            <person name="Abramzon S."/>
            <person name="Nierman W.C."/>
            <person name="Havlak P.H."/>
            <person name="Chen R."/>
            <person name="Durbin K.J."/>
            <person name="Egan A."/>
            <person name="Ren Y."/>
            <person name="Song X.-Z."/>
            <person name="Li B."/>
            <person name="Liu Y."/>
            <person name="Qin X."/>
            <person name="Cawley S."/>
            <person name="Cooney A.J."/>
            <person name="D'Souza L.M."/>
            <person name="Martin K."/>
            <person name="Wu J.Q."/>
            <person name="Gonzalez-Garay M.L."/>
            <person name="Jackson A.R."/>
            <person name="Kalafus K.J."/>
            <person name="McLeod M.P."/>
            <person name="Milosavljevic A."/>
            <person name="Virk D."/>
            <person name="Volkov A."/>
            <person name="Wheeler D.A."/>
            <person name="Zhang Z."/>
            <person name="Bailey J.A."/>
            <person name="Eichler E.E."/>
            <person name="Tuzun E."/>
            <person name="Birney E."/>
            <person name="Mongin E."/>
            <person name="Ureta-Vidal A."/>
            <person name="Woodwark C."/>
            <person name="Zdobnov E."/>
            <person name="Bork P."/>
            <person name="Suyama M."/>
            <person name="Torrents D."/>
            <person name="Alexandersson M."/>
            <person name="Trask B.J."/>
            <person name="Young J.M."/>
            <person name="Huang H."/>
            <person name="Wang H."/>
            <person name="Xing H."/>
            <person name="Daniels S."/>
            <person name="Gietzen D."/>
            <person name="Schmidt J."/>
            <person name="Stevens K."/>
            <person name="Vitt U."/>
            <person name="Wingrove J."/>
            <person name="Camara F."/>
            <person name="Mar Alba M."/>
            <person name="Abril J.F."/>
            <person name="Guigo R."/>
            <person name="Smit A."/>
            <person name="Dubchak I."/>
            <person name="Rubin E.M."/>
            <person name="Couronne O."/>
            <person name="Poliakov A."/>
            <person name="Huebner N."/>
            <person name="Ganten D."/>
            <person name="Goesele C."/>
            <person name="Hummel O."/>
            <person name="Kreitler T."/>
            <person name="Lee Y.-A."/>
            <person name="Monti J."/>
            <person name="Schulz H."/>
            <person name="Zimdahl H."/>
            <person name="Himmelbauer H."/>
            <person name="Lehrach H."/>
            <person name="Jacob H.J."/>
            <person name="Bromberg S."/>
            <person name="Gullings-Handley J."/>
            <person name="Jensen-Seaman M.I."/>
            <person name="Kwitek A.E."/>
            <person name="Lazar J."/>
            <person name="Pasko D."/>
            <person name="Tonellato P.J."/>
            <person name="Twigger S."/>
            <person name="Ponting C.P."/>
            <person name="Duarte J.M."/>
            <person name="Rice S."/>
            <person name="Goodstadt L."/>
            <person name="Beatson S.A."/>
            <person name="Emes R.D."/>
            <person name="Winter E.E."/>
            <person name="Webber C."/>
            <person name="Brandt P."/>
            <person name="Nyakatura G."/>
            <person name="Adetobi M."/>
            <person name="Chiaromonte F."/>
            <person name="Elnitski L."/>
            <person name="Eswara P."/>
            <person name="Hardison R.C."/>
            <person name="Hou M."/>
            <person name="Kolbe D."/>
            <person name="Makova K."/>
            <person name="Miller W."/>
            <person name="Nekrutenko A."/>
            <person name="Riemer C."/>
            <person name="Schwartz S."/>
            <person name="Taylor J."/>
            <person name="Yang S."/>
            <person name="Zhang Y."/>
            <person name="Lindpaintner K."/>
            <person name="Andrews T.D."/>
            <person name="Caccamo M."/>
            <person name="Clamp M."/>
            <person name="Clarke L."/>
            <person name="Curwen V."/>
            <person name="Durbin R.M."/>
            <person name="Eyras E."/>
            <person name="Searle S.M."/>
            <person name="Cooper G.M."/>
            <person name="Batzoglou S."/>
            <person name="Brudno M."/>
            <person name="Sidow A."/>
            <person name="Stone E.A."/>
            <person name="Payseur B.A."/>
            <person name="Bourque G."/>
            <person name="Lopez-Otin C."/>
            <person name="Puente X.S."/>
            <person name="Chakrabarti K."/>
            <person name="Chatterji S."/>
            <person name="Dewey C."/>
            <person name="Pachter L."/>
            <person name="Bray N."/>
            <person name="Yap V.B."/>
            <person name="Caspi A."/>
            <person name="Tesler G."/>
            <person name="Pevzner P.A."/>
            <person name="Haussler D."/>
            <person name="Roskin K.M."/>
            <person name="Baertsch R."/>
            <person name="Clawson H."/>
            <person name="Furey T.S."/>
            <person name="Hinrichs A.S."/>
            <person name="Karolchik D."/>
            <person name="Kent W.J."/>
            <person name="Rosenbloom K.R."/>
            <person name="Trumbower H."/>
            <person name="Weirauch M."/>
            <person name="Cooper D.N."/>
            <person name="Stenson P.D."/>
            <person name="Ma B."/>
            <person name="Brent M."/>
            <person name="Arumugam M."/>
            <person name="Shteynberg D."/>
            <person name="Copley R.R."/>
            <person name="Taylor M.S."/>
            <person name="Riethman H."/>
            <person name="Mudunuri U."/>
            <person name="Peterson J."/>
            <person name="Guyer M."/>
            <person name="Felsenfeld A."/>
            <person name="Old S."/>
            <person name="Mockrin S."/>
            <person name="Collins F.S."/>
        </authorList>
    </citation>
    <scope>NUCLEOTIDE SEQUENCE [LARGE SCALE GENOMIC DNA]</scope>
    <source>
        <strain>Brown Norway</strain>
    </source>
</reference>
<reference evidence="12" key="2">
    <citation type="journal article" date="2014" name="Neuron">
        <title>FLRT structure: balancing repulsion and cell adhesion in cortical and vascular development.</title>
        <authorList>
            <person name="Seiradake E."/>
            <person name="del Toro D."/>
            <person name="Nagel D."/>
            <person name="Cop F."/>
            <person name="Haertl R."/>
            <person name="Ruff T."/>
            <person name="Seyit-Bremer G."/>
            <person name="Harlos K."/>
            <person name="Border E.C."/>
            <person name="Acker-Palmer A."/>
            <person name="Jones E.Y."/>
            <person name="Klein R."/>
        </authorList>
    </citation>
    <scope>X-RAY CRYSTALLOGRAPHY (2.00 ANGSTROMS) OF 1-130 IN COMPLEX WITH FLRT2</scope>
    <scope>INTERACTION WITH FLRT2 AND FLRT3</scope>
    <scope>DISULFIDE BONDS</scope>
    <scope>SUBCELLULAR LOCATION</scope>
    <scope>MUTAGENESIS OF TRP-89 AND HIS-91</scope>
</reference>
<dbReference type="EMBL" id="AABR06088887">
    <property type="status" value="NOT_ANNOTATED_CDS"/>
    <property type="molecule type" value="Genomic_DNA"/>
</dbReference>
<dbReference type="EMBL" id="AABR07026201">
    <property type="status" value="NOT_ANNOTATED_CDS"/>
    <property type="molecule type" value="Genomic_DNA"/>
</dbReference>
<dbReference type="EMBL" id="AABR07026202">
    <property type="status" value="NOT_ANNOTATED_CDS"/>
    <property type="molecule type" value="Genomic_DNA"/>
</dbReference>
<dbReference type="EMBL" id="AABR07026203">
    <property type="status" value="NOT_ANNOTATED_CDS"/>
    <property type="molecule type" value="Genomic_DNA"/>
</dbReference>
<dbReference type="EMBL" id="AABR07026204">
    <property type="status" value="NOT_ANNOTATED_CDS"/>
    <property type="molecule type" value="Genomic_DNA"/>
</dbReference>
<dbReference type="EMBL" id="AABR07026205">
    <property type="status" value="NOT_ANNOTATED_CDS"/>
    <property type="molecule type" value="Genomic_DNA"/>
</dbReference>
<dbReference type="RefSeq" id="NP_001100789.2">
    <property type="nucleotide sequence ID" value="NM_001107319.2"/>
</dbReference>
<dbReference type="PDB" id="4V2B">
    <property type="method" value="X-ray"/>
    <property type="resolution" value="2.00 A"/>
    <property type="chains" value="A/B=1-161"/>
</dbReference>
<dbReference type="PDB" id="4V2C">
    <property type="method" value="X-ray"/>
    <property type="resolution" value="4.00 A"/>
    <property type="chains" value="B/D=1-161"/>
</dbReference>
<dbReference type="PDB" id="5FTT">
    <property type="method" value="X-ray"/>
    <property type="resolution" value="3.40 A"/>
    <property type="chains" value="A/E=32-307"/>
</dbReference>
<dbReference type="PDB" id="5FTU">
    <property type="method" value="X-ray"/>
    <property type="resolution" value="6.01 A"/>
    <property type="chains" value="A/E/I=32-161"/>
</dbReference>
<dbReference type="PDB" id="7ZA1">
    <property type="method" value="X-ray"/>
    <property type="resolution" value="4.10 A"/>
    <property type="chains" value="E/F/G/H=46-307"/>
</dbReference>
<dbReference type="PDB" id="7ZA2">
    <property type="method" value="X-ray"/>
    <property type="resolution" value="4.60 A"/>
    <property type="chains" value="E/F/G/H=46-307"/>
</dbReference>
<dbReference type="PDB" id="7ZA3">
    <property type="method" value="X-ray"/>
    <property type="resolution" value="4.00 A"/>
    <property type="chains" value="E/F/G/H=46-307"/>
</dbReference>
<dbReference type="PDBsum" id="4V2B"/>
<dbReference type="PDBsum" id="4V2C"/>
<dbReference type="PDBsum" id="5FTT"/>
<dbReference type="PDBsum" id="5FTU"/>
<dbReference type="PDBsum" id="7ZA1"/>
<dbReference type="PDBsum" id="7ZA2"/>
<dbReference type="PDBsum" id="7ZA3"/>
<dbReference type="SMR" id="F1LW30"/>
<dbReference type="FunCoup" id="F1LW30">
    <property type="interactions" value="1607"/>
</dbReference>
<dbReference type="STRING" id="10116.ENSRNOP00000015879"/>
<dbReference type="GlyCosmos" id="F1LW30">
    <property type="glycosylation" value="2 sites, No reported glycans"/>
</dbReference>
<dbReference type="GlyGen" id="F1LW30">
    <property type="glycosylation" value="2 sites"/>
</dbReference>
<dbReference type="PhosphoSitePlus" id="F1LW30"/>
<dbReference type="PaxDb" id="10116-ENSRNOP00000015879"/>
<dbReference type="Ensembl" id="ENSRNOT00000111680.1">
    <property type="protein sequence ID" value="ENSRNOP00000077568.1"/>
    <property type="gene ID" value="ENSRNOG00000011858.8"/>
</dbReference>
<dbReference type="GeneID" id="306534"/>
<dbReference type="KEGG" id="rno:306534"/>
<dbReference type="AGR" id="RGD:1309245"/>
<dbReference type="CTD" id="137970"/>
<dbReference type="RGD" id="1309245">
    <property type="gene designation" value="Unc5d"/>
</dbReference>
<dbReference type="eggNOG" id="KOG1480">
    <property type="taxonomic scope" value="Eukaryota"/>
</dbReference>
<dbReference type="GeneTree" id="ENSGT00950000182815"/>
<dbReference type="InParanoid" id="F1LW30"/>
<dbReference type="OMA" id="DESSXLR"/>
<dbReference type="OrthoDB" id="5973910at2759"/>
<dbReference type="TreeFam" id="TF316767"/>
<dbReference type="EvolutionaryTrace" id="F1LW30"/>
<dbReference type="PRO" id="PR:F1LW30"/>
<dbReference type="Proteomes" id="UP000002494">
    <property type="component" value="Chromosome 16"/>
</dbReference>
<dbReference type="GO" id="GO:0009986">
    <property type="term" value="C:cell surface"/>
    <property type="evidence" value="ECO:0000266"/>
    <property type="project" value="RGD"/>
</dbReference>
<dbReference type="GO" id="GO:0005886">
    <property type="term" value="C:plasma membrane"/>
    <property type="evidence" value="ECO:0007669"/>
    <property type="project" value="UniProtKB-SubCell"/>
</dbReference>
<dbReference type="GO" id="GO:0005042">
    <property type="term" value="F:netrin receptor activity"/>
    <property type="evidence" value="ECO:0000318"/>
    <property type="project" value="GO_Central"/>
</dbReference>
<dbReference type="GO" id="GO:0006915">
    <property type="term" value="P:apoptotic process"/>
    <property type="evidence" value="ECO:0007669"/>
    <property type="project" value="UniProtKB-KW"/>
</dbReference>
<dbReference type="GO" id="GO:0007411">
    <property type="term" value="P:axon guidance"/>
    <property type="evidence" value="ECO:0000266"/>
    <property type="project" value="RGD"/>
</dbReference>
<dbReference type="GO" id="GO:0098742">
    <property type="term" value="P:cell-cell adhesion via plasma-membrane adhesion molecules"/>
    <property type="evidence" value="ECO:0000266"/>
    <property type="project" value="RGD"/>
</dbReference>
<dbReference type="GO" id="GO:0021859">
    <property type="term" value="P:pyramidal neuron differentiation"/>
    <property type="evidence" value="ECO:0000266"/>
    <property type="project" value="RGD"/>
</dbReference>
<dbReference type="GO" id="GO:2001222">
    <property type="term" value="P:regulation of neuron migration"/>
    <property type="evidence" value="ECO:0000266"/>
    <property type="project" value="RGD"/>
</dbReference>
<dbReference type="CDD" id="cd08801">
    <property type="entry name" value="Death_UNC5D"/>
    <property type="match status" value="1"/>
</dbReference>
<dbReference type="FunFam" id="1.10.533.10:FF:000001">
    <property type="entry name" value="Unc-5 netrin receptor B"/>
    <property type="match status" value="1"/>
</dbReference>
<dbReference type="FunFam" id="2.20.100.10:FF:000002">
    <property type="entry name" value="Unc-5 netrin receptor C"/>
    <property type="match status" value="1"/>
</dbReference>
<dbReference type="FunFam" id="2.20.100.10:FF:000008">
    <property type="entry name" value="Unc-5 netrin receptor C"/>
    <property type="match status" value="1"/>
</dbReference>
<dbReference type="FunFam" id="2.60.40.10:FF:000037">
    <property type="entry name" value="Unc-5 netrin receptor C"/>
    <property type="match status" value="1"/>
</dbReference>
<dbReference type="FunFam" id="2.60.40.10:FF:000039">
    <property type="entry name" value="Unc-5 netrin receptor C"/>
    <property type="match status" value="1"/>
</dbReference>
<dbReference type="FunFam" id="2.60.220.30:FF:000006">
    <property type="entry name" value="Unc-5 netrin receptor D"/>
    <property type="match status" value="1"/>
</dbReference>
<dbReference type="Gene3D" id="2.60.220.30">
    <property type="match status" value="1"/>
</dbReference>
<dbReference type="Gene3D" id="1.10.533.10">
    <property type="entry name" value="Death Domain, Fas"/>
    <property type="match status" value="1"/>
</dbReference>
<dbReference type="Gene3D" id="2.60.40.10">
    <property type="entry name" value="Immunoglobulins"/>
    <property type="match status" value="2"/>
</dbReference>
<dbReference type="Gene3D" id="2.20.100.10">
    <property type="entry name" value="Thrombospondin type-1 (TSP1) repeat"/>
    <property type="match status" value="2"/>
</dbReference>
<dbReference type="InterPro" id="IPR011029">
    <property type="entry name" value="DEATH-like_dom_sf"/>
</dbReference>
<dbReference type="InterPro" id="IPR000488">
    <property type="entry name" value="Death_dom"/>
</dbReference>
<dbReference type="InterPro" id="IPR007110">
    <property type="entry name" value="Ig-like_dom"/>
</dbReference>
<dbReference type="InterPro" id="IPR036179">
    <property type="entry name" value="Ig-like_dom_sf"/>
</dbReference>
<dbReference type="InterPro" id="IPR013783">
    <property type="entry name" value="Ig-like_fold"/>
</dbReference>
<dbReference type="InterPro" id="IPR013098">
    <property type="entry name" value="Ig_I-set"/>
</dbReference>
<dbReference type="InterPro" id="IPR003599">
    <property type="entry name" value="Ig_sub"/>
</dbReference>
<dbReference type="InterPro" id="IPR003598">
    <property type="entry name" value="Ig_sub2"/>
</dbReference>
<dbReference type="InterPro" id="IPR000884">
    <property type="entry name" value="TSP1_rpt"/>
</dbReference>
<dbReference type="InterPro" id="IPR036383">
    <property type="entry name" value="TSP1_rpt_sf"/>
</dbReference>
<dbReference type="InterPro" id="IPR037936">
    <property type="entry name" value="UNC5"/>
</dbReference>
<dbReference type="InterPro" id="IPR042058">
    <property type="entry name" value="UNC5D_Death"/>
</dbReference>
<dbReference type="InterPro" id="IPR033772">
    <property type="entry name" value="UPA"/>
</dbReference>
<dbReference type="InterPro" id="IPR000906">
    <property type="entry name" value="ZU5_dom"/>
</dbReference>
<dbReference type="PANTHER" id="PTHR12582">
    <property type="entry name" value="NETRIN RECEPTOR UNC5"/>
    <property type="match status" value="1"/>
</dbReference>
<dbReference type="PANTHER" id="PTHR12582:SF5">
    <property type="entry name" value="NETRIN RECEPTOR UNC5D"/>
    <property type="match status" value="1"/>
</dbReference>
<dbReference type="Pfam" id="PF00531">
    <property type="entry name" value="Death"/>
    <property type="match status" value="1"/>
</dbReference>
<dbReference type="Pfam" id="PF07679">
    <property type="entry name" value="I-set"/>
    <property type="match status" value="1"/>
</dbReference>
<dbReference type="Pfam" id="PF00090">
    <property type="entry name" value="TSP_1"/>
    <property type="match status" value="2"/>
</dbReference>
<dbReference type="Pfam" id="PF17217">
    <property type="entry name" value="UPA"/>
    <property type="match status" value="1"/>
</dbReference>
<dbReference type="Pfam" id="PF00791">
    <property type="entry name" value="ZU5"/>
    <property type="match status" value="1"/>
</dbReference>
<dbReference type="PRINTS" id="PR01705">
    <property type="entry name" value="TSP1REPEAT"/>
</dbReference>
<dbReference type="SMART" id="SM00005">
    <property type="entry name" value="DEATH"/>
    <property type="match status" value="1"/>
</dbReference>
<dbReference type="SMART" id="SM00409">
    <property type="entry name" value="IG"/>
    <property type="match status" value="1"/>
</dbReference>
<dbReference type="SMART" id="SM00408">
    <property type="entry name" value="IGc2"/>
    <property type="match status" value="1"/>
</dbReference>
<dbReference type="SMART" id="SM00209">
    <property type="entry name" value="TSP1"/>
    <property type="match status" value="2"/>
</dbReference>
<dbReference type="SMART" id="SM00218">
    <property type="entry name" value="ZU5"/>
    <property type="match status" value="1"/>
</dbReference>
<dbReference type="SUPFAM" id="SSF47986">
    <property type="entry name" value="DEATH domain"/>
    <property type="match status" value="1"/>
</dbReference>
<dbReference type="SUPFAM" id="SSF48726">
    <property type="entry name" value="Immunoglobulin"/>
    <property type="match status" value="2"/>
</dbReference>
<dbReference type="SUPFAM" id="SSF82895">
    <property type="entry name" value="TSP-1 type 1 repeat"/>
    <property type="match status" value="2"/>
</dbReference>
<dbReference type="PROSITE" id="PS50835">
    <property type="entry name" value="IG_LIKE"/>
    <property type="match status" value="1"/>
</dbReference>
<dbReference type="PROSITE" id="PS50092">
    <property type="entry name" value="TSP1"/>
    <property type="match status" value="2"/>
</dbReference>
<dbReference type="PROSITE" id="PS51145">
    <property type="entry name" value="ZU5"/>
    <property type="match status" value="1"/>
</dbReference>
<keyword id="KW-0002">3D-structure</keyword>
<keyword id="KW-0053">Apoptosis</keyword>
<keyword id="KW-1003">Cell membrane</keyword>
<keyword id="KW-0217">Developmental protein</keyword>
<keyword id="KW-1015">Disulfide bond</keyword>
<keyword id="KW-0325">Glycoprotein</keyword>
<keyword id="KW-0393">Immunoglobulin domain</keyword>
<keyword id="KW-0472">Membrane</keyword>
<keyword id="KW-0675">Receptor</keyword>
<keyword id="KW-1185">Reference proteome</keyword>
<keyword id="KW-0677">Repeat</keyword>
<keyword id="KW-0732">Signal</keyword>
<keyword id="KW-0812">Transmembrane</keyword>
<keyword id="KW-1133">Transmembrane helix</keyword>
<organism evidence="10">
    <name type="scientific">Rattus norvegicus</name>
    <name type="common">Rat</name>
    <dbReference type="NCBI Taxonomy" id="10116"/>
    <lineage>
        <taxon>Eukaryota</taxon>
        <taxon>Metazoa</taxon>
        <taxon>Chordata</taxon>
        <taxon>Craniata</taxon>
        <taxon>Vertebrata</taxon>
        <taxon>Euteleostomi</taxon>
        <taxon>Mammalia</taxon>
        <taxon>Eutheria</taxon>
        <taxon>Euarchontoglires</taxon>
        <taxon>Glires</taxon>
        <taxon>Rodentia</taxon>
        <taxon>Myomorpha</taxon>
        <taxon>Muroidea</taxon>
        <taxon>Muridae</taxon>
        <taxon>Murinae</taxon>
        <taxon>Rattus</taxon>
    </lineage>
</organism>
<sequence length="956" mass="106520">MGTGAADRSRGARWWLPWLGLCFWAAGAEAARGADSGEVLPDSIPSAPGTLPHFIEEPEDAYIIKSNPIALRCKARPAMQIFFKCNGEWVHQNEHVSEESLDESSGLKVREVFINVTRQQVEDFHGPEDYWCQCVAWSHLGTSKSRKASVRIAYLRKNFEQDPQGREVPIEGMIVLHCRPPEGVPAAEVEWLKNEEPIDSEQDENIDTRADHNLIIRQARLSDSGNYTCMAANIVAKRRSLSATVVVYVNGGWSSWTEWSACNVRCGRGWQKRSRTCTNPAPLNGGAFCEGMSVQKITCTALCPVDGSWEVWSEWSVCSPECEHLRIRECTAPPPRNGGKFCEGLSQESENCTDGLCILDKKPLHEIKPQRWSRRGIENASDIALYSGLGAAVVAVAVLVIGVTLYRRSHSDYGVDVIDSSALTGGFQTFNFKTVRQGNSLLLNPAMHPDLTVSRTYSGPICLQDPLDKELMTESSLFNPLSDIKVKVQSSFMVSLGVSERAEYHGKNHSGTFPHGNNRGFSTIHPRNKTPYIQNLSSLPTRTELRTTGVFGHLGGRLVMPNTGVSLLIPHGAIPEENSWEIYMSINQGEPSLQSDGSEVLLSPEVTCGPPDMLVTTPFALTIPHCADVSSEHWNIHLKKRTQQGKWEEVMSVEDESTSCYCLLDPFACHVLLDSFGTYALTGEPITDCAVKQLKVAVFGCMSCNSLDYNLRVYCVDNTPCAFQEVVSDERHQGGQLLEEPKLLHFKGNTFSLQISVLDIPPFLWRIKPFTACQEVPFSRVWSSNRQPLHCAFSLERYTPTTTQLSCKICIRQLKGHEQILQVQTSILESERETITFFAQEDSTFPAQTGPKAFKIPYSIRQRICATFDTPNAKGKDWQMLAQKNSINRNLSYFATQSSPSAVILNLWEARHQQDGDLDSLACALEEIGRTHTKLSNITEPQLDDTDFNYSRQNGL</sequence>
<comment type="function">
    <text evidence="1 3">Receptor for the netrin NTN4 that promotes neuronal cell survival. Plays a role in cell-cell adhesion and cell guidance. Receptor for netrin involved in cell migration. Plays a role in axon guidance by mediating axon repulsion of neuronal growth cones in the developing nervous system upon ligand binding. May play a role in apoptosis in response to DNA damage. It also acts as a dependence receptor required for apoptosis induction when not associated with netrin ligand (By similarity). Mediates cell-cell adhesion via its interaction with FLRT3 on an adjacent cell (By similarity).</text>
</comment>
<comment type="subunit">
    <text evidence="3">Interacts (via extracellular domain) with FLRT2 and FLRT3 (via extracellular domain); the interaction is direct. Has higher affinity for FLRT2 (PubMed:25374360). Identified in a complex with FLRT3 and ADGRL3; does not interact with ADGRL3 by itself (By similarity).</text>
</comment>
<comment type="subcellular location">
    <subcellularLocation>
        <location evidence="8">Cell membrane</location>
        <topology evidence="9">Single-pass type I membrane protein</topology>
    </subcellularLocation>
</comment>
<comment type="PTM">
    <text evidence="1">Proteolytically cleaved by caspases during apoptosis. The cleavage does not take place when the receptor is associated with netrin ligand. Its cleavage by caspases is required to induce apoptosis (By similarity).</text>
</comment>
<comment type="similarity">
    <text evidence="9">Belongs to the unc-5 family.</text>
</comment>
<gene>
    <name evidence="11" type="primary">Unc5d</name>
</gene>